<dbReference type="EC" id="5.3.1.1" evidence="1"/>
<dbReference type="EMBL" id="CP001176">
    <property type="protein sequence ID" value="ACK63153.1"/>
    <property type="molecule type" value="Genomic_DNA"/>
</dbReference>
<dbReference type="RefSeq" id="WP_001231038.1">
    <property type="nucleotide sequence ID" value="NZ_VEHB01000004.1"/>
</dbReference>
<dbReference type="SMR" id="B7HED4"/>
<dbReference type="GeneID" id="93005983"/>
<dbReference type="KEGG" id="bcb:BCB4264_A5251"/>
<dbReference type="HOGENOM" id="CLU_024251_2_3_9"/>
<dbReference type="UniPathway" id="UPA00109">
    <property type="reaction ID" value="UER00189"/>
</dbReference>
<dbReference type="UniPathway" id="UPA00138"/>
<dbReference type="Proteomes" id="UP000007096">
    <property type="component" value="Chromosome"/>
</dbReference>
<dbReference type="GO" id="GO:0005829">
    <property type="term" value="C:cytosol"/>
    <property type="evidence" value="ECO:0007669"/>
    <property type="project" value="TreeGrafter"/>
</dbReference>
<dbReference type="GO" id="GO:0004807">
    <property type="term" value="F:triose-phosphate isomerase activity"/>
    <property type="evidence" value="ECO:0007669"/>
    <property type="project" value="UniProtKB-UniRule"/>
</dbReference>
<dbReference type="GO" id="GO:0006094">
    <property type="term" value="P:gluconeogenesis"/>
    <property type="evidence" value="ECO:0007669"/>
    <property type="project" value="UniProtKB-UniRule"/>
</dbReference>
<dbReference type="GO" id="GO:0046166">
    <property type="term" value="P:glyceraldehyde-3-phosphate biosynthetic process"/>
    <property type="evidence" value="ECO:0007669"/>
    <property type="project" value="TreeGrafter"/>
</dbReference>
<dbReference type="GO" id="GO:0019563">
    <property type="term" value="P:glycerol catabolic process"/>
    <property type="evidence" value="ECO:0007669"/>
    <property type="project" value="TreeGrafter"/>
</dbReference>
<dbReference type="GO" id="GO:0006096">
    <property type="term" value="P:glycolytic process"/>
    <property type="evidence" value="ECO:0007669"/>
    <property type="project" value="UniProtKB-UniRule"/>
</dbReference>
<dbReference type="CDD" id="cd00311">
    <property type="entry name" value="TIM"/>
    <property type="match status" value="1"/>
</dbReference>
<dbReference type="FunFam" id="3.20.20.70:FF:000016">
    <property type="entry name" value="Triosephosphate isomerase"/>
    <property type="match status" value="1"/>
</dbReference>
<dbReference type="Gene3D" id="3.20.20.70">
    <property type="entry name" value="Aldolase class I"/>
    <property type="match status" value="1"/>
</dbReference>
<dbReference type="HAMAP" id="MF_00147_B">
    <property type="entry name" value="TIM_B"/>
    <property type="match status" value="1"/>
</dbReference>
<dbReference type="InterPro" id="IPR013785">
    <property type="entry name" value="Aldolase_TIM"/>
</dbReference>
<dbReference type="InterPro" id="IPR035990">
    <property type="entry name" value="TIM_sf"/>
</dbReference>
<dbReference type="InterPro" id="IPR022896">
    <property type="entry name" value="TrioseP_Isoase_bac/euk"/>
</dbReference>
<dbReference type="InterPro" id="IPR000652">
    <property type="entry name" value="Triosephosphate_isomerase"/>
</dbReference>
<dbReference type="InterPro" id="IPR020861">
    <property type="entry name" value="Triosephosphate_isomerase_AS"/>
</dbReference>
<dbReference type="NCBIfam" id="TIGR00419">
    <property type="entry name" value="tim"/>
    <property type="match status" value="1"/>
</dbReference>
<dbReference type="PANTHER" id="PTHR21139">
    <property type="entry name" value="TRIOSEPHOSPHATE ISOMERASE"/>
    <property type="match status" value="1"/>
</dbReference>
<dbReference type="PANTHER" id="PTHR21139:SF42">
    <property type="entry name" value="TRIOSEPHOSPHATE ISOMERASE"/>
    <property type="match status" value="1"/>
</dbReference>
<dbReference type="Pfam" id="PF00121">
    <property type="entry name" value="TIM"/>
    <property type="match status" value="1"/>
</dbReference>
<dbReference type="SUPFAM" id="SSF51351">
    <property type="entry name" value="Triosephosphate isomerase (TIM)"/>
    <property type="match status" value="1"/>
</dbReference>
<dbReference type="PROSITE" id="PS00171">
    <property type="entry name" value="TIM_1"/>
    <property type="match status" value="1"/>
</dbReference>
<dbReference type="PROSITE" id="PS51440">
    <property type="entry name" value="TIM_2"/>
    <property type="match status" value="1"/>
</dbReference>
<accession>B7HED4</accession>
<proteinExistence type="inferred from homology"/>
<reference key="1">
    <citation type="submission" date="2008-10" db="EMBL/GenBank/DDBJ databases">
        <title>Genome sequence of Bacillus cereus B4264.</title>
        <authorList>
            <person name="Dodson R.J."/>
            <person name="Durkin A.S."/>
            <person name="Rosovitz M.J."/>
            <person name="Rasko D.A."/>
            <person name="Hoffmaster A."/>
            <person name="Ravel J."/>
            <person name="Sutton G."/>
        </authorList>
    </citation>
    <scope>NUCLEOTIDE SEQUENCE [LARGE SCALE GENOMIC DNA]</scope>
    <source>
        <strain>B4264</strain>
    </source>
</reference>
<protein>
    <recommendedName>
        <fullName evidence="1">Triosephosphate isomerase</fullName>
        <shortName evidence="1">TIM</shortName>
        <shortName evidence="1">TPI</shortName>
        <ecNumber evidence="1">5.3.1.1</ecNumber>
    </recommendedName>
    <alternativeName>
        <fullName evidence="1">Triose-phosphate isomerase</fullName>
    </alternativeName>
</protein>
<organism>
    <name type="scientific">Bacillus cereus (strain B4264)</name>
    <dbReference type="NCBI Taxonomy" id="405532"/>
    <lineage>
        <taxon>Bacteria</taxon>
        <taxon>Bacillati</taxon>
        <taxon>Bacillota</taxon>
        <taxon>Bacilli</taxon>
        <taxon>Bacillales</taxon>
        <taxon>Bacillaceae</taxon>
        <taxon>Bacillus</taxon>
        <taxon>Bacillus cereus group</taxon>
    </lineage>
</organism>
<name>TPIS_BACC4</name>
<sequence>MRKPIIAGNWKMNKTLSEAVSFVEEVKGQIPAASAVDAVVCSPALFLERLVAATEGTDLQVGAQNMHFEKNGAFTGEISPVALSDLKVGYVVLGHSERREMFAETDESVNKKTIAAFEHGLTPIVCCGETLEERESGKTFDLVAGQVTKALAGLTEEQVKATVIAYEPIWAIGTGKSSSSADANEVCAHIRKVVAEAVSPEAAEAVRIQYGGSVKPENIKEYMAQSDIDGALVGGASLEPASFLGLLGAVK</sequence>
<comment type="function">
    <text evidence="1">Involved in the gluconeogenesis. Catalyzes stereospecifically the conversion of dihydroxyacetone phosphate (DHAP) to D-glyceraldehyde-3-phosphate (G3P).</text>
</comment>
<comment type="catalytic activity">
    <reaction evidence="1">
        <text>D-glyceraldehyde 3-phosphate = dihydroxyacetone phosphate</text>
        <dbReference type="Rhea" id="RHEA:18585"/>
        <dbReference type="ChEBI" id="CHEBI:57642"/>
        <dbReference type="ChEBI" id="CHEBI:59776"/>
        <dbReference type="EC" id="5.3.1.1"/>
    </reaction>
</comment>
<comment type="pathway">
    <text evidence="1">Carbohydrate biosynthesis; gluconeogenesis.</text>
</comment>
<comment type="pathway">
    <text evidence="1">Carbohydrate degradation; glycolysis; D-glyceraldehyde 3-phosphate from glycerone phosphate: step 1/1.</text>
</comment>
<comment type="subunit">
    <text evidence="1">Homodimer.</text>
</comment>
<comment type="subcellular location">
    <subcellularLocation>
        <location evidence="1">Cytoplasm</location>
    </subcellularLocation>
</comment>
<comment type="similarity">
    <text evidence="1">Belongs to the triosephosphate isomerase family.</text>
</comment>
<feature type="chain" id="PRO_1000117997" description="Triosephosphate isomerase">
    <location>
        <begin position="1"/>
        <end position="251"/>
    </location>
</feature>
<feature type="active site" description="Electrophile" evidence="1">
    <location>
        <position position="95"/>
    </location>
</feature>
<feature type="active site" description="Proton acceptor" evidence="1">
    <location>
        <position position="167"/>
    </location>
</feature>
<feature type="binding site" evidence="1">
    <location>
        <begin position="9"/>
        <end position="11"/>
    </location>
    <ligand>
        <name>substrate</name>
    </ligand>
</feature>
<feature type="binding site" evidence="1">
    <location>
        <position position="173"/>
    </location>
    <ligand>
        <name>substrate</name>
    </ligand>
</feature>
<feature type="binding site" evidence="1">
    <location>
        <position position="213"/>
    </location>
    <ligand>
        <name>substrate</name>
    </ligand>
</feature>
<feature type="binding site" evidence="1">
    <location>
        <begin position="234"/>
        <end position="235"/>
    </location>
    <ligand>
        <name>substrate</name>
    </ligand>
</feature>
<feature type="modified residue" description="Phosphoserine" evidence="1">
    <location>
        <position position="213"/>
    </location>
</feature>
<evidence type="ECO:0000255" key="1">
    <source>
        <dbReference type="HAMAP-Rule" id="MF_00147"/>
    </source>
</evidence>
<keyword id="KW-0963">Cytoplasm</keyword>
<keyword id="KW-0312">Gluconeogenesis</keyword>
<keyword id="KW-0324">Glycolysis</keyword>
<keyword id="KW-0413">Isomerase</keyword>
<keyword id="KW-0597">Phosphoprotein</keyword>
<gene>
    <name evidence="1" type="primary">tpiA</name>
    <name type="ordered locus">BCB4264_A5251</name>
</gene>